<gene>
    <name evidence="1" type="primary">apt</name>
    <name type="ordered locus">SF0414</name>
    <name type="ordered locus">S0419.1</name>
</gene>
<name>APT_SHIFL</name>
<reference key="1">
    <citation type="journal article" date="2002" name="Nucleic Acids Res.">
        <title>Genome sequence of Shigella flexneri 2a: insights into pathogenicity through comparison with genomes of Escherichia coli K12 and O157.</title>
        <authorList>
            <person name="Jin Q."/>
            <person name="Yuan Z."/>
            <person name="Xu J."/>
            <person name="Wang Y."/>
            <person name="Shen Y."/>
            <person name="Lu W."/>
            <person name="Wang J."/>
            <person name="Liu H."/>
            <person name="Yang J."/>
            <person name="Yang F."/>
            <person name="Zhang X."/>
            <person name="Zhang J."/>
            <person name="Yang G."/>
            <person name="Wu H."/>
            <person name="Qu D."/>
            <person name="Dong J."/>
            <person name="Sun L."/>
            <person name="Xue Y."/>
            <person name="Zhao A."/>
            <person name="Gao Y."/>
            <person name="Zhu J."/>
            <person name="Kan B."/>
            <person name="Ding K."/>
            <person name="Chen S."/>
            <person name="Cheng H."/>
            <person name="Yao Z."/>
            <person name="He B."/>
            <person name="Chen R."/>
            <person name="Ma D."/>
            <person name="Qiang B."/>
            <person name="Wen Y."/>
            <person name="Hou Y."/>
            <person name="Yu J."/>
        </authorList>
    </citation>
    <scope>NUCLEOTIDE SEQUENCE [LARGE SCALE GENOMIC DNA]</scope>
    <source>
        <strain>301 / Serotype 2a</strain>
    </source>
</reference>
<reference key="2">
    <citation type="journal article" date="2003" name="Infect. Immun.">
        <title>Complete genome sequence and comparative genomics of Shigella flexneri serotype 2a strain 2457T.</title>
        <authorList>
            <person name="Wei J."/>
            <person name="Goldberg M.B."/>
            <person name="Burland V."/>
            <person name="Venkatesan M.M."/>
            <person name="Deng W."/>
            <person name="Fournier G."/>
            <person name="Mayhew G.F."/>
            <person name="Plunkett G. III"/>
            <person name="Rose D.J."/>
            <person name="Darling A."/>
            <person name="Mau B."/>
            <person name="Perna N.T."/>
            <person name="Payne S.M."/>
            <person name="Runyen-Janecky L.J."/>
            <person name="Zhou S."/>
            <person name="Schwartz D.C."/>
            <person name="Blattner F.R."/>
        </authorList>
    </citation>
    <scope>NUCLEOTIDE SEQUENCE [LARGE SCALE GENOMIC DNA]</scope>
    <source>
        <strain>ATCC 700930 / 2457T / Serotype 2a</strain>
    </source>
</reference>
<organism>
    <name type="scientific">Shigella flexneri</name>
    <dbReference type="NCBI Taxonomy" id="623"/>
    <lineage>
        <taxon>Bacteria</taxon>
        <taxon>Pseudomonadati</taxon>
        <taxon>Pseudomonadota</taxon>
        <taxon>Gammaproteobacteria</taxon>
        <taxon>Enterobacterales</taxon>
        <taxon>Enterobacteriaceae</taxon>
        <taxon>Shigella</taxon>
    </lineage>
</organism>
<proteinExistence type="inferred from homology"/>
<keyword id="KW-0963">Cytoplasm</keyword>
<keyword id="KW-0328">Glycosyltransferase</keyword>
<keyword id="KW-0660">Purine salvage</keyword>
<keyword id="KW-1185">Reference proteome</keyword>
<keyword id="KW-0808">Transferase</keyword>
<comment type="function">
    <text evidence="1">Catalyzes a salvage reaction resulting in the formation of AMP, that is energically less costly than de novo synthesis.</text>
</comment>
<comment type="catalytic activity">
    <reaction evidence="1">
        <text>AMP + diphosphate = 5-phospho-alpha-D-ribose 1-diphosphate + adenine</text>
        <dbReference type="Rhea" id="RHEA:16609"/>
        <dbReference type="ChEBI" id="CHEBI:16708"/>
        <dbReference type="ChEBI" id="CHEBI:33019"/>
        <dbReference type="ChEBI" id="CHEBI:58017"/>
        <dbReference type="ChEBI" id="CHEBI:456215"/>
        <dbReference type="EC" id="2.4.2.7"/>
    </reaction>
</comment>
<comment type="pathway">
    <text evidence="1">Purine metabolism; AMP biosynthesis via salvage pathway; AMP from adenine: step 1/1.</text>
</comment>
<comment type="subunit">
    <text evidence="1">Homodimer.</text>
</comment>
<comment type="subcellular location">
    <subcellularLocation>
        <location evidence="1">Cytoplasm</location>
    </subcellularLocation>
</comment>
<comment type="similarity">
    <text evidence="1">Belongs to the purine/pyrimidine phosphoribosyltransferase family.</text>
</comment>
<protein>
    <recommendedName>
        <fullName evidence="1">Adenine phosphoribosyltransferase</fullName>
        <shortName evidence="1">APRT</shortName>
        <ecNumber evidence="1">2.4.2.7</ecNumber>
    </recommendedName>
</protein>
<dbReference type="EC" id="2.4.2.7" evidence="1"/>
<dbReference type="EMBL" id="AE005674">
    <property type="protein sequence ID" value="AAN42069.2"/>
    <property type="molecule type" value="Genomic_DNA"/>
</dbReference>
<dbReference type="EMBL" id="AE014073">
    <property type="protein sequence ID" value="AAP15946.1"/>
    <property type="molecule type" value="Genomic_DNA"/>
</dbReference>
<dbReference type="RefSeq" id="NP_706362.2">
    <property type="nucleotide sequence ID" value="NC_004337.2"/>
</dbReference>
<dbReference type="RefSeq" id="WP_005052987.1">
    <property type="nucleotide sequence ID" value="NZ_WPGW01000015.1"/>
</dbReference>
<dbReference type="SMR" id="Q83M42"/>
<dbReference type="STRING" id="198214.SF0414"/>
<dbReference type="PaxDb" id="198214-SF0414"/>
<dbReference type="GeneID" id="1027534"/>
<dbReference type="KEGG" id="sfl:SF0414"/>
<dbReference type="KEGG" id="sfx:S0421"/>
<dbReference type="PATRIC" id="fig|198214.7.peg.476"/>
<dbReference type="HOGENOM" id="CLU_063339_3_0_6"/>
<dbReference type="UniPathway" id="UPA00588">
    <property type="reaction ID" value="UER00646"/>
</dbReference>
<dbReference type="Proteomes" id="UP000001006">
    <property type="component" value="Chromosome"/>
</dbReference>
<dbReference type="Proteomes" id="UP000002673">
    <property type="component" value="Chromosome"/>
</dbReference>
<dbReference type="GO" id="GO:0005829">
    <property type="term" value="C:cytosol"/>
    <property type="evidence" value="ECO:0007669"/>
    <property type="project" value="TreeGrafter"/>
</dbReference>
<dbReference type="GO" id="GO:0003999">
    <property type="term" value="F:adenine phosphoribosyltransferase activity"/>
    <property type="evidence" value="ECO:0007669"/>
    <property type="project" value="UniProtKB-UniRule"/>
</dbReference>
<dbReference type="GO" id="GO:0006168">
    <property type="term" value="P:adenine salvage"/>
    <property type="evidence" value="ECO:0007669"/>
    <property type="project" value="InterPro"/>
</dbReference>
<dbReference type="GO" id="GO:0044209">
    <property type="term" value="P:AMP salvage"/>
    <property type="evidence" value="ECO:0007669"/>
    <property type="project" value="UniProtKB-UniRule"/>
</dbReference>
<dbReference type="GO" id="GO:0006166">
    <property type="term" value="P:purine ribonucleoside salvage"/>
    <property type="evidence" value="ECO:0007669"/>
    <property type="project" value="UniProtKB-KW"/>
</dbReference>
<dbReference type="CDD" id="cd06223">
    <property type="entry name" value="PRTases_typeI"/>
    <property type="match status" value="1"/>
</dbReference>
<dbReference type="FunFam" id="3.40.50.2020:FF:000004">
    <property type="entry name" value="Adenine phosphoribosyltransferase"/>
    <property type="match status" value="1"/>
</dbReference>
<dbReference type="Gene3D" id="3.40.50.2020">
    <property type="match status" value="1"/>
</dbReference>
<dbReference type="HAMAP" id="MF_00004">
    <property type="entry name" value="Aden_phosphoribosyltr"/>
    <property type="match status" value="1"/>
</dbReference>
<dbReference type="InterPro" id="IPR005764">
    <property type="entry name" value="Ade_phspho_trans"/>
</dbReference>
<dbReference type="InterPro" id="IPR050120">
    <property type="entry name" value="Adenine_PRTase"/>
</dbReference>
<dbReference type="InterPro" id="IPR000836">
    <property type="entry name" value="PRibTrfase_dom"/>
</dbReference>
<dbReference type="InterPro" id="IPR029057">
    <property type="entry name" value="PRTase-like"/>
</dbReference>
<dbReference type="NCBIfam" id="TIGR01090">
    <property type="entry name" value="apt"/>
    <property type="match status" value="1"/>
</dbReference>
<dbReference type="NCBIfam" id="NF002632">
    <property type="entry name" value="PRK02304.1-1"/>
    <property type="match status" value="1"/>
</dbReference>
<dbReference type="NCBIfam" id="NF002633">
    <property type="entry name" value="PRK02304.1-2"/>
    <property type="match status" value="1"/>
</dbReference>
<dbReference type="NCBIfam" id="NF002634">
    <property type="entry name" value="PRK02304.1-3"/>
    <property type="match status" value="1"/>
</dbReference>
<dbReference type="NCBIfam" id="NF002636">
    <property type="entry name" value="PRK02304.1-5"/>
    <property type="match status" value="1"/>
</dbReference>
<dbReference type="PANTHER" id="PTHR11776">
    <property type="entry name" value="ADENINE PHOSPHORIBOSYLTRANSFERASE"/>
    <property type="match status" value="1"/>
</dbReference>
<dbReference type="PANTHER" id="PTHR11776:SF7">
    <property type="entry name" value="PHOSPHORIBOSYLTRANSFERASE DOMAIN-CONTAINING PROTEIN"/>
    <property type="match status" value="1"/>
</dbReference>
<dbReference type="Pfam" id="PF00156">
    <property type="entry name" value="Pribosyltran"/>
    <property type="match status" value="1"/>
</dbReference>
<dbReference type="SUPFAM" id="SSF53271">
    <property type="entry name" value="PRTase-like"/>
    <property type="match status" value="1"/>
</dbReference>
<dbReference type="PROSITE" id="PS00103">
    <property type="entry name" value="PUR_PYR_PR_TRANSFER"/>
    <property type="match status" value="1"/>
</dbReference>
<evidence type="ECO:0000255" key="1">
    <source>
        <dbReference type="HAMAP-Rule" id="MF_00004"/>
    </source>
</evidence>
<accession>Q83M42</accession>
<accession>Q7UDH7</accession>
<feature type="chain" id="PRO_0000149447" description="Adenine phosphoribosyltransferase">
    <location>
        <begin position="1"/>
        <end position="183"/>
    </location>
</feature>
<sequence>MTATAQQLEYLKNSIKSIQDYPKPGILFRDVTSLLEDPKAYALSIDLLVERYKNAGITKVVGTEARGFLFGAPVALGLGVGFVPVRKPGKLPRETISENYDLEYGTDQLEIHVDAIKPGDKVLVVDDLLATGGTIEATVKLIRRLGGEVADAAFIINLFDLGGEQRLEKQGITSYSLVPFPGH</sequence>